<dbReference type="EC" id="2.8.1.-" evidence="1"/>
<dbReference type="EMBL" id="CR378669">
    <property type="protein sequence ID" value="CAG20245.1"/>
    <property type="molecule type" value="Genomic_DNA"/>
</dbReference>
<dbReference type="SMR" id="Q6LR31"/>
<dbReference type="STRING" id="298386.PBPRA1841"/>
<dbReference type="KEGG" id="ppr:PBPRA1841"/>
<dbReference type="eggNOG" id="COG0037">
    <property type="taxonomic scope" value="Bacteria"/>
</dbReference>
<dbReference type="HOGENOM" id="CLU_026481_0_0_6"/>
<dbReference type="Proteomes" id="UP000000593">
    <property type="component" value="Chromosome 1"/>
</dbReference>
<dbReference type="GO" id="GO:0005737">
    <property type="term" value="C:cytoplasm"/>
    <property type="evidence" value="ECO:0007669"/>
    <property type="project" value="UniProtKB-SubCell"/>
</dbReference>
<dbReference type="GO" id="GO:0051539">
    <property type="term" value="F:4 iron, 4 sulfur cluster binding"/>
    <property type="evidence" value="ECO:0007669"/>
    <property type="project" value="UniProtKB-UniRule"/>
</dbReference>
<dbReference type="GO" id="GO:0005524">
    <property type="term" value="F:ATP binding"/>
    <property type="evidence" value="ECO:0007669"/>
    <property type="project" value="UniProtKB-UniRule"/>
</dbReference>
<dbReference type="GO" id="GO:0000287">
    <property type="term" value="F:magnesium ion binding"/>
    <property type="evidence" value="ECO:0007669"/>
    <property type="project" value="UniProtKB-UniRule"/>
</dbReference>
<dbReference type="GO" id="GO:0016783">
    <property type="term" value="F:sulfurtransferase activity"/>
    <property type="evidence" value="ECO:0007669"/>
    <property type="project" value="UniProtKB-UniRule"/>
</dbReference>
<dbReference type="GO" id="GO:0000049">
    <property type="term" value="F:tRNA binding"/>
    <property type="evidence" value="ECO:0007669"/>
    <property type="project" value="UniProtKB-KW"/>
</dbReference>
<dbReference type="GO" id="GO:0034227">
    <property type="term" value="P:tRNA thio-modification"/>
    <property type="evidence" value="ECO:0007669"/>
    <property type="project" value="UniProtKB-UniRule"/>
</dbReference>
<dbReference type="CDD" id="cd24138">
    <property type="entry name" value="TtcA-like"/>
    <property type="match status" value="1"/>
</dbReference>
<dbReference type="Gene3D" id="3.40.50.620">
    <property type="entry name" value="HUPs"/>
    <property type="match status" value="1"/>
</dbReference>
<dbReference type="HAMAP" id="MF_01850">
    <property type="entry name" value="TtcA"/>
    <property type="match status" value="1"/>
</dbReference>
<dbReference type="InterPro" id="IPR014729">
    <property type="entry name" value="Rossmann-like_a/b/a_fold"/>
</dbReference>
<dbReference type="InterPro" id="IPR011063">
    <property type="entry name" value="TilS/TtcA_N"/>
</dbReference>
<dbReference type="InterPro" id="IPR012089">
    <property type="entry name" value="tRNA_Cyd_32_2_STrfase"/>
</dbReference>
<dbReference type="InterPro" id="IPR035107">
    <property type="entry name" value="tRNA_thiolation_TtcA_Ctu1"/>
</dbReference>
<dbReference type="NCBIfam" id="NF007972">
    <property type="entry name" value="PRK10696.1"/>
    <property type="match status" value="1"/>
</dbReference>
<dbReference type="PANTHER" id="PTHR43686:SF1">
    <property type="entry name" value="AMINOTRAN_5 DOMAIN-CONTAINING PROTEIN"/>
    <property type="match status" value="1"/>
</dbReference>
<dbReference type="PANTHER" id="PTHR43686">
    <property type="entry name" value="SULFURTRANSFERASE-RELATED"/>
    <property type="match status" value="1"/>
</dbReference>
<dbReference type="Pfam" id="PF01171">
    <property type="entry name" value="ATP_bind_3"/>
    <property type="match status" value="1"/>
</dbReference>
<dbReference type="PIRSF" id="PIRSF004976">
    <property type="entry name" value="ATPase_YdaO"/>
    <property type="match status" value="1"/>
</dbReference>
<dbReference type="SUPFAM" id="SSF52402">
    <property type="entry name" value="Adenine nucleotide alpha hydrolases-like"/>
    <property type="match status" value="1"/>
</dbReference>
<reference key="1">
    <citation type="journal article" date="2005" name="Science">
        <title>Life at depth: Photobacterium profundum genome sequence and expression analysis.</title>
        <authorList>
            <person name="Vezzi A."/>
            <person name="Campanaro S."/>
            <person name="D'Angelo M."/>
            <person name="Simonato F."/>
            <person name="Vitulo N."/>
            <person name="Lauro F.M."/>
            <person name="Cestaro A."/>
            <person name="Malacrida G."/>
            <person name="Simionati B."/>
            <person name="Cannata N."/>
            <person name="Romualdi C."/>
            <person name="Bartlett D.H."/>
            <person name="Valle G."/>
        </authorList>
    </citation>
    <scope>NUCLEOTIDE SEQUENCE [LARGE SCALE GENOMIC DNA]</scope>
    <source>
        <strain>ATCC BAA-1253 / SS9</strain>
    </source>
</reference>
<name>TTCA_PHOPR</name>
<keyword id="KW-0004">4Fe-4S</keyword>
<keyword id="KW-0067">ATP-binding</keyword>
<keyword id="KW-0963">Cytoplasm</keyword>
<keyword id="KW-0408">Iron</keyword>
<keyword id="KW-0411">Iron-sulfur</keyword>
<keyword id="KW-0460">Magnesium</keyword>
<keyword id="KW-0479">Metal-binding</keyword>
<keyword id="KW-0547">Nucleotide-binding</keyword>
<keyword id="KW-1185">Reference proteome</keyword>
<keyword id="KW-0694">RNA-binding</keyword>
<keyword id="KW-0808">Transferase</keyword>
<keyword id="KW-0819">tRNA processing</keyword>
<keyword id="KW-0820">tRNA-binding</keyword>
<accession>Q6LR31</accession>
<evidence type="ECO:0000255" key="1">
    <source>
        <dbReference type="HAMAP-Rule" id="MF_01850"/>
    </source>
</evidence>
<protein>
    <recommendedName>
        <fullName evidence="1">tRNA-cytidine(32) 2-sulfurtransferase</fullName>
        <ecNumber evidence="1">2.8.1.-</ecNumber>
    </recommendedName>
    <alternativeName>
        <fullName evidence="1">Two-thiocytidine biosynthesis protein A</fullName>
    </alternativeName>
    <alternativeName>
        <fullName evidence="1">tRNA 2-thiocytidine biosynthesis protein TtcA</fullName>
    </alternativeName>
</protein>
<sequence length="301" mass="34554">MRMNQQDTHKENLEFNKLQKKLRRNVGNAITEYNMIEESDVVMACISGGKDSFAMLDILLGLQKSAPINFKVIAVNLDQKQPGFPEHILPNYFESLGIPYYIVDKDTYSVVREKIPEGKTTCGLCSRLRRGTLYSFAEKIGATKIALGHHMDDMVETMFLNMFYGSRLKSMPPKLRSDDQRNVVIRPLTYCREKDLIAYAEYREYPIIPCNLCGSQENLQRQNIKAMLIDWDTQTPGRVESIFKSTQNISPSQLADRNIFDFENLPLDRTGKRAEYEFTEAEVSSSNINIDESMFIDVTNI</sequence>
<feature type="chain" id="PRO_0000348784" description="tRNA-cytidine(32) 2-sulfurtransferase">
    <location>
        <begin position="1"/>
        <end position="301"/>
    </location>
</feature>
<feature type="short sequence motif" description="PP-loop motif" evidence="1">
    <location>
        <begin position="47"/>
        <end position="52"/>
    </location>
</feature>
<feature type="binding site" evidence="1">
    <location>
        <position position="122"/>
    </location>
    <ligand>
        <name>[4Fe-4S] cluster</name>
        <dbReference type="ChEBI" id="CHEBI:49883"/>
    </ligand>
</feature>
<feature type="binding site" evidence="1">
    <location>
        <position position="125"/>
    </location>
    <ligand>
        <name>[4Fe-4S] cluster</name>
        <dbReference type="ChEBI" id="CHEBI:49883"/>
    </ligand>
</feature>
<feature type="binding site" evidence="1">
    <location>
        <position position="213"/>
    </location>
    <ligand>
        <name>[4Fe-4S] cluster</name>
        <dbReference type="ChEBI" id="CHEBI:49883"/>
    </ligand>
</feature>
<gene>
    <name evidence="1" type="primary">ttcA</name>
    <name type="ordered locus">PBPRA1841</name>
</gene>
<organism>
    <name type="scientific">Photobacterium profundum (strain SS9)</name>
    <dbReference type="NCBI Taxonomy" id="298386"/>
    <lineage>
        <taxon>Bacteria</taxon>
        <taxon>Pseudomonadati</taxon>
        <taxon>Pseudomonadota</taxon>
        <taxon>Gammaproteobacteria</taxon>
        <taxon>Vibrionales</taxon>
        <taxon>Vibrionaceae</taxon>
        <taxon>Photobacterium</taxon>
    </lineage>
</organism>
<comment type="function">
    <text evidence="1">Catalyzes the ATP-dependent 2-thiolation of cytidine in position 32 of tRNA, to form 2-thiocytidine (s(2)C32). The sulfur atoms are provided by the cysteine/cysteine desulfurase (IscS) system.</text>
</comment>
<comment type="catalytic activity">
    <reaction evidence="1">
        <text>cytidine(32) in tRNA + S-sulfanyl-L-cysteinyl-[cysteine desulfurase] + AH2 + ATP = 2-thiocytidine(32) in tRNA + L-cysteinyl-[cysteine desulfurase] + A + AMP + diphosphate + H(+)</text>
        <dbReference type="Rhea" id="RHEA:57048"/>
        <dbReference type="Rhea" id="RHEA-COMP:10288"/>
        <dbReference type="Rhea" id="RHEA-COMP:12157"/>
        <dbReference type="Rhea" id="RHEA-COMP:12158"/>
        <dbReference type="Rhea" id="RHEA-COMP:14821"/>
        <dbReference type="ChEBI" id="CHEBI:13193"/>
        <dbReference type="ChEBI" id="CHEBI:15378"/>
        <dbReference type="ChEBI" id="CHEBI:17499"/>
        <dbReference type="ChEBI" id="CHEBI:29950"/>
        <dbReference type="ChEBI" id="CHEBI:30616"/>
        <dbReference type="ChEBI" id="CHEBI:33019"/>
        <dbReference type="ChEBI" id="CHEBI:61963"/>
        <dbReference type="ChEBI" id="CHEBI:82748"/>
        <dbReference type="ChEBI" id="CHEBI:141453"/>
        <dbReference type="ChEBI" id="CHEBI:456215"/>
    </reaction>
    <physiologicalReaction direction="left-to-right" evidence="1">
        <dbReference type="Rhea" id="RHEA:57049"/>
    </physiologicalReaction>
</comment>
<comment type="cofactor">
    <cofactor evidence="1">
        <name>Mg(2+)</name>
        <dbReference type="ChEBI" id="CHEBI:18420"/>
    </cofactor>
</comment>
<comment type="cofactor">
    <cofactor evidence="1">
        <name>[4Fe-4S] cluster</name>
        <dbReference type="ChEBI" id="CHEBI:49883"/>
    </cofactor>
    <text evidence="1">Binds 1 [4Fe-4S] cluster per subunit. The cluster is chelated by three Cys residues, the fourth Fe has a free coordination site that may bind a sulfur atom transferred from the persulfide of IscS.</text>
</comment>
<comment type="pathway">
    <text evidence="1">tRNA modification.</text>
</comment>
<comment type="subunit">
    <text evidence="1">Homodimer.</text>
</comment>
<comment type="subcellular location">
    <subcellularLocation>
        <location evidence="1">Cytoplasm</location>
    </subcellularLocation>
</comment>
<comment type="miscellaneous">
    <text evidence="1">The thiolation reaction likely consists of two steps: a first activation step by ATP to form an adenylated intermediate of the target base of tRNA, and a second nucleophilic substitution step of the sulfur (S) atom supplied by the hydrosulfide attached to the Fe-S cluster.</text>
</comment>
<comment type="similarity">
    <text evidence="1">Belongs to the TtcA family.</text>
</comment>
<proteinExistence type="inferred from homology"/>